<feature type="chain" id="PRO_1000189859" description="1-deoxy-D-xylulose 5-phosphate reductoisomerase">
    <location>
        <begin position="1"/>
        <end position="398"/>
    </location>
</feature>
<feature type="binding site" evidence="1">
    <location>
        <position position="10"/>
    </location>
    <ligand>
        <name>NADPH</name>
        <dbReference type="ChEBI" id="CHEBI:57783"/>
    </ligand>
</feature>
<feature type="binding site" evidence="1">
    <location>
        <position position="11"/>
    </location>
    <ligand>
        <name>NADPH</name>
        <dbReference type="ChEBI" id="CHEBI:57783"/>
    </ligand>
</feature>
<feature type="binding site" evidence="1">
    <location>
        <position position="12"/>
    </location>
    <ligand>
        <name>NADPH</name>
        <dbReference type="ChEBI" id="CHEBI:57783"/>
    </ligand>
</feature>
<feature type="binding site" evidence="1">
    <location>
        <position position="13"/>
    </location>
    <ligand>
        <name>NADPH</name>
        <dbReference type="ChEBI" id="CHEBI:57783"/>
    </ligand>
</feature>
<feature type="binding site" evidence="1">
    <location>
        <position position="37"/>
    </location>
    <ligand>
        <name>NADPH</name>
        <dbReference type="ChEBI" id="CHEBI:57783"/>
    </ligand>
</feature>
<feature type="binding site" evidence="1">
    <location>
        <position position="38"/>
    </location>
    <ligand>
        <name>NADPH</name>
        <dbReference type="ChEBI" id="CHEBI:57783"/>
    </ligand>
</feature>
<feature type="binding site" evidence="1">
    <location>
        <position position="124"/>
    </location>
    <ligand>
        <name>NADPH</name>
        <dbReference type="ChEBI" id="CHEBI:57783"/>
    </ligand>
</feature>
<feature type="binding site" evidence="1">
    <location>
        <position position="125"/>
    </location>
    <ligand>
        <name>1-deoxy-D-xylulose 5-phosphate</name>
        <dbReference type="ChEBI" id="CHEBI:57792"/>
    </ligand>
</feature>
<feature type="binding site" evidence="1">
    <location>
        <position position="126"/>
    </location>
    <ligand>
        <name>NADPH</name>
        <dbReference type="ChEBI" id="CHEBI:57783"/>
    </ligand>
</feature>
<feature type="binding site" evidence="1">
    <location>
        <position position="150"/>
    </location>
    <ligand>
        <name>Mn(2+)</name>
        <dbReference type="ChEBI" id="CHEBI:29035"/>
    </ligand>
</feature>
<feature type="binding site" evidence="1">
    <location>
        <position position="151"/>
    </location>
    <ligand>
        <name>1-deoxy-D-xylulose 5-phosphate</name>
        <dbReference type="ChEBI" id="CHEBI:57792"/>
    </ligand>
</feature>
<feature type="binding site" evidence="1">
    <location>
        <position position="152"/>
    </location>
    <ligand>
        <name>1-deoxy-D-xylulose 5-phosphate</name>
        <dbReference type="ChEBI" id="CHEBI:57792"/>
    </ligand>
</feature>
<feature type="binding site" evidence="1">
    <location>
        <position position="152"/>
    </location>
    <ligand>
        <name>Mn(2+)</name>
        <dbReference type="ChEBI" id="CHEBI:29035"/>
    </ligand>
</feature>
<feature type="binding site" evidence="1">
    <location>
        <position position="186"/>
    </location>
    <ligand>
        <name>1-deoxy-D-xylulose 5-phosphate</name>
        <dbReference type="ChEBI" id="CHEBI:57792"/>
    </ligand>
</feature>
<feature type="binding site" evidence="1">
    <location>
        <position position="209"/>
    </location>
    <ligand>
        <name>1-deoxy-D-xylulose 5-phosphate</name>
        <dbReference type="ChEBI" id="CHEBI:57792"/>
    </ligand>
</feature>
<feature type="binding site" evidence="1">
    <location>
        <position position="215"/>
    </location>
    <ligand>
        <name>NADPH</name>
        <dbReference type="ChEBI" id="CHEBI:57783"/>
    </ligand>
</feature>
<feature type="binding site" evidence="1">
    <location>
        <position position="222"/>
    </location>
    <ligand>
        <name>1-deoxy-D-xylulose 5-phosphate</name>
        <dbReference type="ChEBI" id="CHEBI:57792"/>
    </ligand>
</feature>
<feature type="binding site" evidence="1">
    <location>
        <position position="227"/>
    </location>
    <ligand>
        <name>1-deoxy-D-xylulose 5-phosphate</name>
        <dbReference type="ChEBI" id="CHEBI:57792"/>
    </ligand>
</feature>
<feature type="binding site" evidence="1">
    <location>
        <position position="228"/>
    </location>
    <ligand>
        <name>1-deoxy-D-xylulose 5-phosphate</name>
        <dbReference type="ChEBI" id="CHEBI:57792"/>
    </ligand>
</feature>
<feature type="binding site" evidence="1">
    <location>
        <position position="231"/>
    </location>
    <ligand>
        <name>1-deoxy-D-xylulose 5-phosphate</name>
        <dbReference type="ChEBI" id="CHEBI:57792"/>
    </ligand>
</feature>
<feature type="binding site" evidence="1">
    <location>
        <position position="231"/>
    </location>
    <ligand>
        <name>Mn(2+)</name>
        <dbReference type="ChEBI" id="CHEBI:29035"/>
    </ligand>
</feature>
<gene>
    <name evidence="1" type="primary">dxr</name>
    <name type="ordered locus">BUAP5A_230</name>
</gene>
<organism>
    <name type="scientific">Buchnera aphidicola subsp. Acyrthosiphon pisum (strain 5A)</name>
    <dbReference type="NCBI Taxonomy" id="563178"/>
    <lineage>
        <taxon>Bacteria</taxon>
        <taxon>Pseudomonadati</taxon>
        <taxon>Pseudomonadota</taxon>
        <taxon>Gammaproteobacteria</taxon>
        <taxon>Enterobacterales</taxon>
        <taxon>Erwiniaceae</taxon>
        <taxon>Buchnera</taxon>
    </lineage>
</organism>
<name>DXR_BUCA5</name>
<comment type="function">
    <text evidence="1">Catalyzes the NADPH-dependent rearrangement and reduction of 1-deoxy-D-xylulose-5-phosphate (DXP) to 2-C-methyl-D-erythritol 4-phosphate (MEP).</text>
</comment>
<comment type="catalytic activity">
    <reaction evidence="1">
        <text>2-C-methyl-D-erythritol 4-phosphate + NADP(+) = 1-deoxy-D-xylulose 5-phosphate + NADPH + H(+)</text>
        <dbReference type="Rhea" id="RHEA:13717"/>
        <dbReference type="ChEBI" id="CHEBI:15378"/>
        <dbReference type="ChEBI" id="CHEBI:57783"/>
        <dbReference type="ChEBI" id="CHEBI:57792"/>
        <dbReference type="ChEBI" id="CHEBI:58262"/>
        <dbReference type="ChEBI" id="CHEBI:58349"/>
        <dbReference type="EC" id="1.1.1.267"/>
    </reaction>
    <physiologicalReaction direction="right-to-left" evidence="1">
        <dbReference type="Rhea" id="RHEA:13719"/>
    </physiologicalReaction>
</comment>
<comment type="cofactor">
    <cofactor evidence="1">
        <name>Mg(2+)</name>
        <dbReference type="ChEBI" id="CHEBI:18420"/>
    </cofactor>
    <cofactor evidence="1">
        <name>Mn(2+)</name>
        <dbReference type="ChEBI" id="CHEBI:29035"/>
    </cofactor>
</comment>
<comment type="pathway">
    <text evidence="1">Isoprenoid biosynthesis; isopentenyl diphosphate biosynthesis via DXP pathway; isopentenyl diphosphate from 1-deoxy-D-xylulose 5-phosphate: step 1/6.</text>
</comment>
<comment type="subunit">
    <text evidence="1">Homodimer.</text>
</comment>
<comment type="similarity">
    <text evidence="1">Belongs to the DXR family.</text>
</comment>
<dbReference type="EC" id="1.1.1.267" evidence="1"/>
<dbReference type="EMBL" id="CP001161">
    <property type="protein sequence ID" value="ACL30603.1"/>
    <property type="molecule type" value="Genomic_DNA"/>
</dbReference>
<dbReference type="SMR" id="B8D932"/>
<dbReference type="KEGG" id="bap:BUAP5A_230"/>
<dbReference type="HOGENOM" id="CLU_035714_0_1_6"/>
<dbReference type="OrthoDB" id="9806546at2"/>
<dbReference type="UniPathway" id="UPA00056">
    <property type="reaction ID" value="UER00092"/>
</dbReference>
<dbReference type="Proteomes" id="UP000006904">
    <property type="component" value="Chromosome"/>
</dbReference>
<dbReference type="GO" id="GO:0030604">
    <property type="term" value="F:1-deoxy-D-xylulose-5-phosphate reductoisomerase activity"/>
    <property type="evidence" value="ECO:0007669"/>
    <property type="project" value="UniProtKB-UniRule"/>
</dbReference>
<dbReference type="GO" id="GO:0030145">
    <property type="term" value="F:manganese ion binding"/>
    <property type="evidence" value="ECO:0007669"/>
    <property type="project" value="TreeGrafter"/>
</dbReference>
<dbReference type="GO" id="GO:0070402">
    <property type="term" value="F:NADPH binding"/>
    <property type="evidence" value="ECO:0007669"/>
    <property type="project" value="InterPro"/>
</dbReference>
<dbReference type="GO" id="GO:0051484">
    <property type="term" value="P:isopentenyl diphosphate biosynthetic process, methylerythritol 4-phosphate pathway involved in terpenoid biosynthetic process"/>
    <property type="evidence" value="ECO:0007669"/>
    <property type="project" value="TreeGrafter"/>
</dbReference>
<dbReference type="FunFam" id="1.10.1740.10:FF:000004">
    <property type="entry name" value="1-deoxy-D-xylulose 5-phosphate reductoisomerase"/>
    <property type="match status" value="1"/>
</dbReference>
<dbReference type="FunFam" id="3.40.50.720:FF:000045">
    <property type="entry name" value="1-deoxy-D-xylulose 5-phosphate reductoisomerase"/>
    <property type="match status" value="1"/>
</dbReference>
<dbReference type="Gene3D" id="1.10.1740.10">
    <property type="match status" value="1"/>
</dbReference>
<dbReference type="Gene3D" id="3.40.50.720">
    <property type="entry name" value="NAD(P)-binding Rossmann-like Domain"/>
    <property type="match status" value="1"/>
</dbReference>
<dbReference type="HAMAP" id="MF_00183">
    <property type="entry name" value="DXP_reductoisom"/>
    <property type="match status" value="1"/>
</dbReference>
<dbReference type="InterPro" id="IPR003821">
    <property type="entry name" value="DXP_reductoisomerase"/>
</dbReference>
<dbReference type="InterPro" id="IPR013644">
    <property type="entry name" value="DXP_reductoisomerase_C"/>
</dbReference>
<dbReference type="InterPro" id="IPR013512">
    <property type="entry name" value="DXP_reductoisomerase_N"/>
</dbReference>
<dbReference type="InterPro" id="IPR026877">
    <property type="entry name" value="DXPR_C"/>
</dbReference>
<dbReference type="InterPro" id="IPR036169">
    <property type="entry name" value="DXPR_C_sf"/>
</dbReference>
<dbReference type="InterPro" id="IPR036291">
    <property type="entry name" value="NAD(P)-bd_dom_sf"/>
</dbReference>
<dbReference type="NCBIfam" id="TIGR00243">
    <property type="entry name" value="Dxr"/>
    <property type="match status" value="1"/>
</dbReference>
<dbReference type="NCBIfam" id="NF003938">
    <property type="entry name" value="PRK05447.1-1"/>
    <property type="match status" value="1"/>
</dbReference>
<dbReference type="PANTHER" id="PTHR30525">
    <property type="entry name" value="1-DEOXY-D-XYLULOSE 5-PHOSPHATE REDUCTOISOMERASE"/>
    <property type="match status" value="1"/>
</dbReference>
<dbReference type="PANTHER" id="PTHR30525:SF0">
    <property type="entry name" value="1-DEOXY-D-XYLULOSE 5-PHOSPHATE REDUCTOISOMERASE, CHLOROPLASTIC"/>
    <property type="match status" value="1"/>
</dbReference>
<dbReference type="Pfam" id="PF08436">
    <property type="entry name" value="DXP_redisom_C"/>
    <property type="match status" value="1"/>
</dbReference>
<dbReference type="Pfam" id="PF02670">
    <property type="entry name" value="DXP_reductoisom"/>
    <property type="match status" value="1"/>
</dbReference>
<dbReference type="Pfam" id="PF13288">
    <property type="entry name" value="DXPR_C"/>
    <property type="match status" value="1"/>
</dbReference>
<dbReference type="PIRSF" id="PIRSF006205">
    <property type="entry name" value="Dxp_reductismrs"/>
    <property type="match status" value="1"/>
</dbReference>
<dbReference type="SUPFAM" id="SSF69055">
    <property type="entry name" value="1-deoxy-D-xylulose-5-phosphate reductoisomerase, C-terminal domain"/>
    <property type="match status" value="1"/>
</dbReference>
<dbReference type="SUPFAM" id="SSF55347">
    <property type="entry name" value="Glyceraldehyde-3-phosphate dehydrogenase-like, C-terminal domain"/>
    <property type="match status" value="1"/>
</dbReference>
<dbReference type="SUPFAM" id="SSF51735">
    <property type="entry name" value="NAD(P)-binding Rossmann-fold domains"/>
    <property type="match status" value="1"/>
</dbReference>
<accession>B8D932</accession>
<protein>
    <recommendedName>
        <fullName evidence="1">1-deoxy-D-xylulose 5-phosphate reductoisomerase</fullName>
        <shortName evidence="1">DXP reductoisomerase</shortName>
        <ecNumber evidence="1">1.1.1.267</ecNumber>
    </recommendedName>
    <alternativeName>
        <fullName evidence="1">1-deoxyxylulose-5-phosphate reductoisomerase</fullName>
    </alternativeName>
    <alternativeName>
        <fullName evidence="1">2-C-methyl-D-erythritol 4-phosphate synthase</fullName>
    </alternativeName>
</protein>
<keyword id="KW-0414">Isoprene biosynthesis</keyword>
<keyword id="KW-0464">Manganese</keyword>
<keyword id="KW-0479">Metal-binding</keyword>
<keyword id="KW-0521">NADP</keyword>
<keyword id="KW-0560">Oxidoreductase</keyword>
<proteinExistence type="inferred from homology"/>
<sequence length="398" mass="44159">MKKITILGSTGSIGINALSIIQKNPDLFKVIALVANKNFSIMLRQCELFSPDWVAMRDEKSAHILRKKLKHSKINTQVLTGEKDICALAALEETDHVISAIVGMAGLLPTLSAIHAGKTILLANKESLITSGYFFMKALSSSGAKIIPIDSEHNAIFQVLPLEIQKNLGKTTLEKNSIKHLVLTGSGGPFYKFSSSDLSNVTPDQACSHPNWLMGKKISVDSATMMNKGLEYAEARWLFNALESEIKILIHPESIIHSMVQYYDGSLLAQLSAPDIRTSISYAMSWPDRICTEVDYLNFYKINNLTFFEPDFTQFPCLKLAIDAFSQGQASMTVLNAANEIAVSSFLDSKISFTKIYEINMEILMSSCFSEPKCIQDILEIDRKVRILAKNKVSSLIF</sequence>
<reference key="1">
    <citation type="journal article" date="2009" name="Science">
        <title>The dynamics and time scale of ongoing genomic erosion in symbiotic bacteria.</title>
        <authorList>
            <person name="Moran N.A."/>
            <person name="McLaughlin H.J."/>
            <person name="Sorek R."/>
        </authorList>
    </citation>
    <scope>NUCLEOTIDE SEQUENCE [LARGE SCALE GENOMIC DNA]</scope>
    <source>
        <strain>5A</strain>
    </source>
</reference>
<evidence type="ECO:0000255" key="1">
    <source>
        <dbReference type="HAMAP-Rule" id="MF_00183"/>
    </source>
</evidence>